<dbReference type="EC" id="2.7.4.9" evidence="1"/>
<dbReference type="EMBL" id="CP000471">
    <property type="protein sequence ID" value="ABK44378.1"/>
    <property type="molecule type" value="Genomic_DNA"/>
</dbReference>
<dbReference type="RefSeq" id="WP_011713522.1">
    <property type="nucleotide sequence ID" value="NC_008576.1"/>
</dbReference>
<dbReference type="SMR" id="A0L8T5"/>
<dbReference type="STRING" id="156889.Mmc1_1870"/>
<dbReference type="KEGG" id="mgm:Mmc1_1870"/>
<dbReference type="eggNOG" id="COG0125">
    <property type="taxonomic scope" value="Bacteria"/>
</dbReference>
<dbReference type="HOGENOM" id="CLU_049131_0_2_5"/>
<dbReference type="OrthoDB" id="9774907at2"/>
<dbReference type="Proteomes" id="UP000002586">
    <property type="component" value="Chromosome"/>
</dbReference>
<dbReference type="GO" id="GO:0005829">
    <property type="term" value="C:cytosol"/>
    <property type="evidence" value="ECO:0007669"/>
    <property type="project" value="TreeGrafter"/>
</dbReference>
<dbReference type="GO" id="GO:0005524">
    <property type="term" value="F:ATP binding"/>
    <property type="evidence" value="ECO:0007669"/>
    <property type="project" value="UniProtKB-UniRule"/>
</dbReference>
<dbReference type="GO" id="GO:0004798">
    <property type="term" value="F:dTMP kinase activity"/>
    <property type="evidence" value="ECO:0007669"/>
    <property type="project" value="UniProtKB-UniRule"/>
</dbReference>
<dbReference type="GO" id="GO:0006233">
    <property type="term" value="P:dTDP biosynthetic process"/>
    <property type="evidence" value="ECO:0007669"/>
    <property type="project" value="InterPro"/>
</dbReference>
<dbReference type="GO" id="GO:0006235">
    <property type="term" value="P:dTTP biosynthetic process"/>
    <property type="evidence" value="ECO:0007669"/>
    <property type="project" value="UniProtKB-UniRule"/>
</dbReference>
<dbReference type="GO" id="GO:0006227">
    <property type="term" value="P:dUDP biosynthetic process"/>
    <property type="evidence" value="ECO:0007669"/>
    <property type="project" value="TreeGrafter"/>
</dbReference>
<dbReference type="CDD" id="cd01672">
    <property type="entry name" value="TMPK"/>
    <property type="match status" value="1"/>
</dbReference>
<dbReference type="FunFam" id="3.40.50.300:FF:000225">
    <property type="entry name" value="Thymidylate kinase"/>
    <property type="match status" value="1"/>
</dbReference>
<dbReference type="Gene3D" id="3.40.50.300">
    <property type="entry name" value="P-loop containing nucleotide triphosphate hydrolases"/>
    <property type="match status" value="1"/>
</dbReference>
<dbReference type="HAMAP" id="MF_00165">
    <property type="entry name" value="Thymidylate_kinase"/>
    <property type="match status" value="1"/>
</dbReference>
<dbReference type="InterPro" id="IPR027417">
    <property type="entry name" value="P-loop_NTPase"/>
</dbReference>
<dbReference type="InterPro" id="IPR039430">
    <property type="entry name" value="Thymidylate_kin-like_dom"/>
</dbReference>
<dbReference type="InterPro" id="IPR018095">
    <property type="entry name" value="Thymidylate_kin_CS"/>
</dbReference>
<dbReference type="InterPro" id="IPR018094">
    <property type="entry name" value="Thymidylate_kinase"/>
</dbReference>
<dbReference type="NCBIfam" id="TIGR00041">
    <property type="entry name" value="DTMP_kinase"/>
    <property type="match status" value="1"/>
</dbReference>
<dbReference type="PANTHER" id="PTHR10344">
    <property type="entry name" value="THYMIDYLATE KINASE"/>
    <property type="match status" value="1"/>
</dbReference>
<dbReference type="PANTHER" id="PTHR10344:SF4">
    <property type="entry name" value="UMP-CMP KINASE 2, MITOCHONDRIAL"/>
    <property type="match status" value="1"/>
</dbReference>
<dbReference type="Pfam" id="PF02223">
    <property type="entry name" value="Thymidylate_kin"/>
    <property type="match status" value="1"/>
</dbReference>
<dbReference type="SUPFAM" id="SSF52540">
    <property type="entry name" value="P-loop containing nucleoside triphosphate hydrolases"/>
    <property type="match status" value="1"/>
</dbReference>
<dbReference type="PROSITE" id="PS01331">
    <property type="entry name" value="THYMIDYLATE_KINASE"/>
    <property type="match status" value="1"/>
</dbReference>
<name>KTHY_MAGMM</name>
<gene>
    <name evidence="1" type="primary">tmk</name>
    <name type="ordered locus">Mmc1_1870</name>
</gene>
<comment type="function">
    <text evidence="1">Phosphorylation of dTMP to form dTDP in both de novo and salvage pathways of dTTP synthesis.</text>
</comment>
<comment type="catalytic activity">
    <reaction evidence="1">
        <text>dTMP + ATP = dTDP + ADP</text>
        <dbReference type="Rhea" id="RHEA:13517"/>
        <dbReference type="ChEBI" id="CHEBI:30616"/>
        <dbReference type="ChEBI" id="CHEBI:58369"/>
        <dbReference type="ChEBI" id="CHEBI:63528"/>
        <dbReference type="ChEBI" id="CHEBI:456216"/>
        <dbReference type="EC" id="2.7.4.9"/>
    </reaction>
</comment>
<comment type="similarity">
    <text evidence="1">Belongs to the thymidylate kinase family.</text>
</comment>
<reference key="1">
    <citation type="journal article" date="2009" name="Appl. Environ. Microbiol.">
        <title>Complete genome sequence of the chemolithoautotrophic marine magnetotactic coccus strain MC-1.</title>
        <authorList>
            <person name="Schubbe S."/>
            <person name="Williams T.J."/>
            <person name="Xie G."/>
            <person name="Kiss H.E."/>
            <person name="Brettin T.S."/>
            <person name="Martinez D."/>
            <person name="Ross C.A."/>
            <person name="Schuler D."/>
            <person name="Cox B.L."/>
            <person name="Nealson K.H."/>
            <person name="Bazylinski D.A."/>
        </authorList>
    </citation>
    <scope>NUCLEOTIDE SEQUENCE [LARGE SCALE GENOMIC DNA]</scope>
    <source>
        <strain>ATCC BAA-1437 / JCM 17883 / MC-1</strain>
    </source>
</reference>
<organism>
    <name type="scientific">Magnetococcus marinus (strain ATCC BAA-1437 / JCM 17883 / MC-1)</name>
    <dbReference type="NCBI Taxonomy" id="156889"/>
    <lineage>
        <taxon>Bacteria</taxon>
        <taxon>Pseudomonadati</taxon>
        <taxon>Pseudomonadota</taxon>
        <taxon>Alphaproteobacteria</taxon>
        <taxon>Magnetococcales</taxon>
        <taxon>Magnetococcaceae</taxon>
        <taxon>Magnetococcus</taxon>
    </lineage>
</organism>
<keyword id="KW-0067">ATP-binding</keyword>
<keyword id="KW-0418">Kinase</keyword>
<keyword id="KW-0545">Nucleotide biosynthesis</keyword>
<keyword id="KW-0547">Nucleotide-binding</keyword>
<keyword id="KW-1185">Reference proteome</keyword>
<keyword id="KW-0808">Transferase</keyword>
<proteinExistence type="inferred from homology"/>
<protein>
    <recommendedName>
        <fullName evidence="1">Thymidylate kinase</fullName>
        <ecNumber evidence="1">2.7.4.9</ecNumber>
    </recommendedName>
    <alternativeName>
        <fullName evidence="1">dTMP kinase</fullName>
    </alternativeName>
</protein>
<evidence type="ECO:0000255" key="1">
    <source>
        <dbReference type="HAMAP-Rule" id="MF_00165"/>
    </source>
</evidence>
<accession>A0L8T5</accession>
<feature type="chain" id="PRO_1000071561" description="Thymidylate kinase">
    <location>
        <begin position="1"/>
        <end position="210"/>
    </location>
</feature>
<feature type="binding site" evidence="1">
    <location>
        <begin position="10"/>
        <end position="17"/>
    </location>
    <ligand>
        <name>ATP</name>
        <dbReference type="ChEBI" id="CHEBI:30616"/>
    </ligand>
</feature>
<sequence>MQGRFITFEGGEGAGKSTQIAQLTQSLQAHGVKVLCTREPGGCPISERIREILVTGQGDDLDGTSELLLILAARHEHIRQVIRPALASGHWVLCDRFEDSTLAYQGGGRGGDGPWLRQLGQWIRGDVFPDLTLLLDLDPTVGLARSKRRGGQEQRFEQEALSFHQQVRQAFLQMAQQEPQRMIPIDADQPVQMVAATIWREVEGRFFVSF</sequence>